<keyword id="KW-0066">ATP synthesis</keyword>
<keyword id="KW-0067">ATP-binding</keyword>
<keyword id="KW-0139">CF(1)</keyword>
<keyword id="KW-0375">Hydrogen ion transport</keyword>
<keyword id="KW-0406">Ion transport</keyword>
<keyword id="KW-0472">Membrane</keyword>
<keyword id="KW-0547">Nucleotide-binding</keyword>
<keyword id="KW-0934">Plastid</keyword>
<keyword id="KW-1278">Translocase</keyword>
<keyword id="KW-0813">Transport</keyword>
<feature type="chain" id="PRO_0000339083" description="ATP synthase subunit alpha, plastid">
    <location>
        <begin position="1"/>
        <end position="511"/>
    </location>
</feature>
<feature type="binding site" evidence="2">
    <location>
        <begin position="170"/>
        <end position="177"/>
    </location>
    <ligand>
        <name>ATP</name>
        <dbReference type="ChEBI" id="CHEBI:30616"/>
    </ligand>
</feature>
<feature type="site" description="Required for activity" evidence="2">
    <location>
        <position position="363"/>
    </location>
</feature>
<reference key="1">
    <citation type="journal article" date="2007" name="BMC Plant Biol.">
        <title>Complete DNA sequences of the plastid genomes of two parasitic flowering plant species, Cuscuta reflexa and Cuscuta gronovii.</title>
        <authorList>
            <person name="Funk H.T."/>
            <person name="Berg S."/>
            <person name="Krupinska K."/>
            <person name="Maier U.-G."/>
            <person name="Krause K."/>
        </authorList>
    </citation>
    <scope>NUCLEOTIDE SEQUENCE [LARGE SCALE GENOMIC DNA]</scope>
</reference>
<sequence length="511" mass="56057">MVTIRADEIRNIIRERIEQYNREVKILNKGTVLQVGDAIARIHGLYEVMAGELVEFEEGTIGIALNLESNNVGVVLMGDGLMIKEGSSVKATGRIAQIPVGEAYLGRVINAQANPIDGRGKISSSAFRLIEASAPGIISRRSIYEPLQTGLIAIDSMIPIGRGQRELIIGDRQTGKTAVATDTIINQQGQNVICVYVAIGQKASSVAQVVTTLQERGAMEYTIVVAETADSPATLQYLAPYTGAALAEYFMYSERHTLIIYDDLSKQAQAYRQMSLLLRRPPGREAYPGDVFYLHSRLLERAAKLSSKLGEGSMTALPIVETQSGDVSAYIPTNVISITDGQIFLSVDLFNAGIRPAINVGISVSRVGSAAQIKAMKKVAGKLKLELAQFAELEAFAQFASDLDKTSQNQLARGQRLRELLKQSQSAPLTVAEQIMTIYTGINGYLDSLPLGQVRKFLIELCTYLKTNKPRFQEILSSTKTFTEEAEDLLKEAIRDQMDRFLLKEQAEINF</sequence>
<protein>
    <recommendedName>
        <fullName evidence="2">ATP synthase subunit alpha, plastid</fullName>
        <ecNumber evidence="2">7.1.2.2</ecNumber>
    </recommendedName>
    <alternativeName>
        <fullName evidence="2">ATP synthase F1 sector subunit alpha</fullName>
    </alternativeName>
    <alternativeName>
        <fullName evidence="2">F-ATPase subunit alpha</fullName>
    </alternativeName>
</protein>
<evidence type="ECO:0000250" key="1"/>
<evidence type="ECO:0000255" key="2">
    <source>
        <dbReference type="HAMAP-Rule" id="MF_01346"/>
    </source>
</evidence>
<proteinExistence type="inferred from homology"/>
<name>ATPA_CUSRE</name>
<accession>A7M951</accession>
<gene>
    <name evidence="2" type="primary">atpA</name>
</gene>
<geneLocation type="plastid"/>
<comment type="function">
    <text evidence="2">Produces ATP from ADP in the presence of a proton gradient across the membrane. The alpha chain is a regulatory subunit.</text>
</comment>
<comment type="catalytic activity">
    <reaction evidence="2">
        <text>ATP + H2O + 4 H(+)(in) = ADP + phosphate + 5 H(+)(out)</text>
        <dbReference type="Rhea" id="RHEA:57720"/>
        <dbReference type="ChEBI" id="CHEBI:15377"/>
        <dbReference type="ChEBI" id="CHEBI:15378"/>
        <dbReference type="ChEBI" id="CHEBI:30616"/>
        <dbReference type="ChEBI" id="CHEBI:43474"/>
        <dbReference type="ChEBI" id="CHEBI:456216"/>
        <dbReference type="EC" id="7.1.2.2"/>
    </reaction>
</comment>
<comment type="subunit">
    <text evidence="2">F-type ATPases have 2 components, CF(1) - the catalytic core - and CF(0) - the membrane proton channel. CF(1) has five subunits: alpha(3), beta(3), gamma(1), delta(1), epsilon(1). CF(0) has four main subunits: a, b, b' and c.</text>
</comment>
<comment type="subcellular location">
    <subcellularLocation>
        <location evidence="1">Plastid membrane</location>
        <topology evidence="2">Peripheral membrane protein</topology>
    </subcellularLocation>
</comment>
<comment type="similarity">
    <text evidence="2">Belongs to the ATPase alpha/beta chains family.</text>
</comment>
<dbReference type="EC" id="7.1.2.2" evidence="2"/>
<dbReference type="EMBL" id="AM711640">
    <property type="protein sequence ID" value="CAM98379.1"/>
    <property type="molecule type" value="Genomic_DNA"/>
</dbReference>
<dbReference type="RefSeq" id="YP_001430093.1">
    <property type="nucleotide sequence ID" value="NC_009766.1"/>
</dbReference>
<dbReference type="SMR" id="A7M951"/>
<dbReference type="GeneID" id="5536660"/>
<dbReference type="GO" id="GO:0042170">
    <property type="term" value="C:plastid membrane"/>
    <property type="evidence" value="ECO:0007669"/>
    <property type="project" value="UniProtKB-SubCell"/>
</dbReference>
<dbReference type="GO" id="GO:0045259">
    <property type="term" value="C:proton-transporting ATP synthase complex"/>
    <property type="evidence" value="ECO:0007669"/>
    <property type="project" value="UniProtKB-KW"/>
</dbReference>
<dbReference type="GO" id="GO:0043531">
    <property type="term" value="F:ADP binding"/>
    <property type="evidence" value="ECO:0007669"/>
    <property type="project" value="TreeGrafter"/>
</dbReference>
<dbReference type="GO" id="GO:0005524">
    <property type="term" value="F:ATP binding"/>
    <property type="evidence" value="ECO:0007669"/>
    <property type="project" value="UniProtKB-KW"/>
</dbReference>
<dbReference type="GO" id="GO:0046933">
    <property type="term" value="F:proton-transporting ATP synthase activity, rotational mechanism"/>
    <property type="evidence" value="ECO:0007669"/>
    <property type="project" value="InterPro"/>
</dbReference>
<dbReference type="CDD" id="cd18113">
    <property type="entry name" value="ATP-synt_F1_alpha_C"/>
    <property type="match status" value="1"/>
</dbReference>
<dbReference type="CDD" id="cd18116">
    <property type="entry name" value="ATP-synt_F1_alpha_N"/>
    <property type="match status" value="1"/>
</dbReference>
<dbReference type="CDD" id="cd01132">
    <property type="entry name" value="F1-ATPase_alpha_CD"/>
    <property type="match status" value="1"/>
</dbReference>
<dbReference type="FunFam" id="1.20.150.20:FF:000001">
    <property type="entry name" value="ATP synthase subunit alpha"/>
    <property type="match status" value="1"/>
</dbReference>
<dbReference type="FunFam" id="2.40.30.20:FF:000001">
    <property type="entry name" value="ATP synthase subunit alpha"/>
    <property type="match status" value="1"/>
</dbReference>
<dbReference type="FunFam" id="3.40.50.300:FF:000002">
    <property type="entry name" value="ATP synthase subunit alpha"/>
    <property type="match status" value="1"/>
</dbReference>
<dbReference type="Gene3D" id="2.40.30.20">
    <property type="match status" value="1"/>
</dbReference>
<dbReference type="Gene3D" id="1.20.150.20">
    <property type="entry name" value="ATP synthase alpha/beta chain, C-terminal domain"/>
    <property type="match status" value="1"/>
</dbReference>
<dbReference type="Gene3D" id="3.40.50.300">
    <property type="entry name" value="P-loop containing nucleotide triphosphate hydrolases"/>
    <property type="match status" value="1"/>
</dbReference>
<dbReference type="HAMAP" id="MF_01346">
    <property type="entry name" value="ATP_synth_alpha_bact"/>
    <property type="match status" value="1"/>
</dbReference>
<dbReference type="InterPro" id="IPR023366">
    <property type="entry name" value="ATP_synth_asu-like_sf"/>
</dbReference>
<dbReference type="InterPro" id="IPR000793">
    <property type="entry name" value="ATP_synth_asu_C"/>
</dbReference>
<dbReference type="InterPro" id="IPR038376">
    <property type="entry name" value="ATP_synth_asu_C_sf"/>
</dbReference>
<dbReference type="InterPro" id="IPR033732">
    <property type="entry name" value="ATP_synth_F1_a_nt-bd_dom"/>
</dbReference>
<dbReference type="InterPro" id="IPR005294">
    <property type="entry name" value="ATP_synth_F1_asu"/>
</dbReference>
<dbReference type="InterPro" id="IPR020003">
    <property type="entry name" value="ATPase_a/bsu_AS"/>
</dbReference>
<dbReference type="InterPro" id="IPR004100">
    <property type="entry name" value="ATPase_F1/V1/A1_a/bsu_N"/>
</dbReference>
<dbReference type="InterPro" id="IPR036121">
    <property type="entry name" value="ATPase_F1/V1/A1_a/bsu_N_sf"/>
</dbReference>
<dbReference type="InterPro" id="IPR000194">
    <property type="entry name" value="ATPase_F1/V1/A1_a/bsu_nucl-bd"/>
</dbReference>
<dbReference type="InterPro" id="IPR027417">
    <property type="entry name" value="P-loop_NTPase"/>
</dbReference>
<dbReference type="NCBIfam" id="TIGR00962">
    <property type="entry name" value="atpA"/>
    <property type="match status" value="1"/>
</dbReference>
<dbReference type="NCBIfam" id="NF009884">
    <property type="entry name" value="PRK13343.1"/>
    <property type="match status" value="1"/>
</dbReference>
<dbReference type="PANTHER" id="PTHR48082">
    <property type="entry name" value="ATP SYNTHASE SUBUNIT ALPHA, MITOCHONDRIAL"/>
    <property type="match status" value="1"/>
</dbReference>
<dbReference type="PANTHER" id="PTHR48082:SF2">
    <property type="entry name" value="ATP SYNTHASE SUBUNIT ALPHA, MITOCHONDRIAL"/>
    <property type="match status" value="1"/>
</dbReference>
<dbReference type="Pfam" id="PF00006">
    <property type="entry name" value="ATP-synt_ab"/>
    <property type="match status" value="1"/>
</dbReference>
<dbReference type="Pfam" id="PF00306">
    <property type="entry name" value="ATP-synt_ab_C"/>
    <property type="match status" value="1"/>
</dbReference>
<dbReference type="Pfam" id="PF02874">
    <property type="entry name" value="ATP-synt_ab_N"/>
    <property type="match status" value="1"/>
</dbReference>
<dbReference type="PIRSF" id="PIRSF039088">
    <property type="entry name" value="F_ATPase_subunit_alpha"/>
    <property type="match status" value="1"/>
</dbReference>
<dbReference type="SUPFAM" id="SSF47917">
    <property type="entry name" value="C-terminal domain of alpha and beta subunits of F1 ATP synthase"/>
    <property type="match status" value="1"/>
</dbReference>
<dbReference type="SUPFAM" id="SSF50615">
    <property type="entry name" value="N-terminal domain of alpha and beta subunits of F1 ATP synthase"/>
    <property type="match status" value="1"/>
</dbReference>
<dbReference type="SUPFAM" id="SSF52540">
    <property type="entry name" value="P-loop containing nucleoside triphosphate hydrolases"/>
    <property type="match status" value="1"/>
</dbReference>
<dbReference type="PROSITE" id="PS00152">
    <property type="entry name" value="ATPASE_ALPHA_BETA"/>
    <property type="match status" value="1"/>
</dbReference>
<organism>
    <name type="scientific">Cuscuta reflexa</name>
    <name type="common">Southern Asian dodder</name>
    <dbReference type="NCBI Taxonomy" id="4129"/>
    <lineage>
        <taxon>Eukaryota</taxon>
        <taxon>Viridiplantae</taxon>
        <taxon>Streptophyta</taxon>
        <taxon>Embryophyta</taxon>
        <taxon>Tracheophyta</taxon>
        <taxon>Spermatophyta</taxon>
        <taxon>Magnoliopsida</taxon>
        <taxon>eudicotyledons</taxon>
        <taxon>Gunneridae</taxon>
        <taxon>Pentapetalae</taxon>
        <taxon>asterids</taxon>
        <taxon>lamiids</taxon>
        <taxon>Solanales</taxon>
        <taxon>Convolvulaceae</taxon>
        <taxon>Cuscuteae</taxon>
        <taxon>Cuscuta</taxon>
        <taxon>Cuscuta subgen. Monogynella</taxon>
    </lineage>
</organism>